<keyword id="KW-0131">Cell cycle</keyword>
<keyword id="KW-0132">Cell division</keyword>
<comment type="function">
    <text evidence="1">Prevents the cell division inhibition by proteins MinC and MinD at internal division sites while permitting inhibition at polar sites. This ensures cell division at the proper site by restricting the formation of a division septum at the midpoint of the long axis of the cell.</text>
</comment>
<comment type="similarity">
    <text evidence="1">Belongs to the MinE family.</text>
</comment>
<accession>Q3AMC8</accession>
<sequence length="102" mass="11585">MTLKEFIDKLLRRQPASAETAKERLQLVLAHDRSDLNPELLEQMRREILEVVARYVEIDLAQGDVSLETEDRVTALVANLPIRRPIAQTAKVEPSEQQPAQA</sequence>
<dbReference type="EMBL" id="CP000110">
    <property type="protein sequence ID" value="ABB34254.1"/>
    <property type="molecule type" value="Genomic_DNA"/>
</dbReference>
<dbReference type="RefSeq" id="WP_011363488.1">
    <property type="nucleotide sequence ID" value="NC_007516.1"/>
</dbReference>
<dbReference type="SMR" id="Q3AMC8"/>
<dbReference type="STRING" id="110662.Syncc9605_0480"/>
<dbReference type="KEGG" id="syd:Syncc9605_0480"/>
<dbReference type="eggNOG" id="COG0851">
    <property type="taxonomic scope" value="Bacteria"/>
</dbReference>
<dbReference type="HOGENOM" id="CLU_137929_1_1_3"/>
<dbReference type="OrthoDB" id="9796578at2"/>
<dbReference type="GO" id="GO:0051301">
    <property type="term" value="P:cell division"/>
    <property type="evidence" value="ECO:0007669"/>
    <property type="project" value="UniProtKB-KW"/>
</dbReference>
<dbReference type="GO" id="GO:0032955">
    <property type="term" value="P:regulation of division septum assembly"/>
    <property type="evidence" value="ECO:0007669"/>
    <property type="project" value="InterPro"/>
</dbReference>
<dbReference type="Gene3D" id="3.30.1070.10">
    <property type="entry name" value="Cell division topological specificity factor MinE"/>
    <property type="match status" value="1"/>
</dbReference>
<dbReference type="HAMAP" id="MF_00262">
    <property type="entry name" value="MinE"/>
    <property type="match status" value="1"/>
</dbReference>
<dbReference type="InterPro" id="IPR005527">
    <property type="entry name" value="MinE"/>
</dbReference>
<dbReference type="InterPro" id="IPR036707">
    <property type="entry name" value="MinE_sf"/>
</dbReference>
<dbReference type="NCBIfam" id="TIGR01215">
    <property type="entry name" value="minE"/>
    <property type="match status" value="1"/>
</dbReference>
<dbReference type="NCBIfam" id="NF001422">
    <property type="entry name" value="PRK00296.1"/>
    <property type="match status" value="1"/>
</dbReference>
<dbReference type="Pfam" id="PF03776">
    <property type="entry name" value="MinE"/>
    <property type="match status" value="1"/>
</dbReference>
<dbReference type="SUPFAM" id="SSF55229">
    <property type="entry name" value="Cell division protein MinE topological specificity domain"/>
    <property type="match status" value="1"/>
</dbReference>
<protein>
    <recommendedName>
        <fullName evidence="1">Cell division topological specificity factor</fullName>
    </recommendedName>
</protein>
<feature type="chain" id="PRO_0000298198" description="Cell division topological specificity factor">
    <location>
        <begin position="1"/>
        <end position="102"/>
    </location>
</feature>
<evidence type="ECO:0000255" key="1">
    <source>
        <dbReference type="HAMAP-Rule" id="MF_00262"/>
    </source>
</evidence>
<reference key="1">
    <citation type="submission" date="2005-07" db="EMBL/GenBank/DDBJ databases">
        <title>Complete sequence of Synechococcus sp. CC9605.</title>
        <authorList>
            <consortium name="US DOE Joint Genome Institute"/>
            <person name="Copeland A."/>
            <person name="Lucas S."/>
            <person name="Lapidus A."/>
            <person name="Barry K."/>
            <person name="Detter J.C."/>
            <person name="Glavina T."/>
            <person name="Hammon N."/>
            <person name="Israni S."/>
            <person name="Pitluck S."/>
            <person name="Schmutz J."/>
            <person name="Martinez M."/>
            <person name="Larimer F."/>
            <person name="Land M."/>
            <person name="Kyrpides N."/>
            <person name="Ivanova N."/>
            <person name="Richardson P."/>
        </authorList>
    </citation>
    <scope>NUCLEOTIDE SEQUENCE [LARGE SCALE GENOMIC DNA]</scope>
    <source>
        <strain>CC9605</strain>
    </source>
</reference>
<gene>
    <name evidence="1" type="primary">minE</name>
    <name type="ordered locus">Syncc9605_0480</name>
</gene>
<name>MINE_SYNSC</name>
<organism>
    <name type="scientific">Synechococcus sp. (strain CC9605)</name>
    <dbReference type="NCBI Taxonomy" id="110662"/>
    <lineage>
        <taxon>Bacteria</taxon>
        <taxon>Bacillati</taxon>
        <taxon>Cyanobacteriota</taxon>
        <taxon>Cyanophyceae</taxon>
        <taxon>Synechococcales</taxon>
        <taxon>Synechococcaceae</taxon>
        <taxon>Synechococcus</taxon>
    </lineage>
</organism>
<proteinExistence type="inferred from homology"/>